<keyword id="KW-0963">Cytoplasm</keyword>
<keyword id="KW-0217">Developmental protein</keyword>
<keyword id="KW-0238">DNA-binding</keyword>
<keyword id="KW-0539">Nucleus</keyword>
<keyword id="KW-1185">Reference proteome</keyword>
<keyword id="KW-0804">Transcription</keyword>
<keyword id="KW-0805">Transcription regulation</keyword>
<sequence length="376" mass="41507">MASAPWPERVPRLLAPRLPSYPPPPPTVGLPSMEQEEAYLELYLDQCAAQDGLAPPRSPLFSPVVPYDMYILNASNPDTAFNSNPEVKETSGDFSSVDLSFLPDEVTQENKDQPVISKHETEENSESQSPQSRLPSPSEQDVGLGLNSSSLSNSHSQLHPGDTDSVQPSPEKPNSDSLSLASITPMTPMTPISECCGIVPQLQNIVSTVNLACKLDLKKIALHAKNAEYNPKRFAAVIMRIREPRTTALIFSSGKMVCTGAKSEEQSRLAARKYARVVQKLGFPAKFLDFKIQNMVGSCDVKFPIRLEGLVLTHQQFSSYEPELFPGLIYRMIKPRIVLLIFVSGKVVLTGAKVRAEIYEAFENIYPILKGFRKTT</sequence>
<protein>
    <recommendedName>
        <fullName>TATA box-binding protein-like 2</fullName>
        <shortName>TBP-like 2</shortName>
    </recommendedName>
    <alternativeName>
        <fullName>TATA box-binding protein-related factor 3</fullName>
        <shortName>TBP-related factor 3</shortName>
    </alternativeName>
</protein>
<dbReference type="EMBL" id="AADA01072659">
    <property type="status" value="NOT_ANNOTATED_CDS"/>
    <property type="molecule type" value="Genomic_DNA"/>
</dbReference>
<dbReference type="EMBL" id="AADA01300750">
    <property type="status" value="NOT_ANNOTATED_CDS"/>
    <property type="molecule type" value="Genomic_DNA"/>
</dbReference>
<dbReference type="EMBL" id="AADA01358262">
    <property type="status" value="NOT_ANNOTATED_CDS"/>
    <property type="molecule type" value="Genomic_DNA"/>
</dbReference>
<dbReference type="EMBL" id="BK005772">
    <property type="protein sequence ID" value="DAA06032.1"/>
    <property type="molecule type" value="mRNA"/>
</dbReference>
<dbReference type="RefSeq" id="NP_001098076.1">
    <property type="nucleotide sequence ID" value="NM_001104606.1"/>
</dbReference>
<dbReference type="SMR" id="A6H907"/>
<dbReference type="STRING" id="9598.ENSPTRP00000010815"/>
<dbReference type="PaxDb" id="9598-ENSPTRP00000010815"/>
<dbReference type="GeneID" id="452923"/>
<dbReference type="KEGG" id="ptr:452923"/>
<dbReference type="CTD" id="387332"/>
<dbReference type="eggNOG" id="KOG3302">
    <property type="taxonomic scope" value="Eukaryota"/>
</dbReference>
<dbReference type="InParanoid" id="A6H907"/>
<dbReference type="Proteomes" id="UP000002277">
    <property type="component" value="Unplaced"/>
</dbReference>
<dbReference type="GO" id="GO:0005737">
    <property type="term" value="C:cytoplasm"/>
    <property type="evidence" value="ECO:0007669"/>
    <property type="project" value="UniProtKB-SubCell"/>
</dbReference>
<dbReference type="GO" id="GO:0005634">
    <property type="term" value="C:nucleus"/>
    <property type="evidence" value="ECO:0007669"/>
    <property type="project" value="UniProtKB-SubCell"/>
</dbReference>
<dbReference type="GO" id="GO:0003677">
    <property type="term" value="F:DNA binding"/>
    <property type="evidence" value="ECO:0007669"/>
    <property type="project" value="UniProtKB-KW"/>
</dbReference>
<dbReference type="GO" id="GO:0016251">
    <property type="term" value="F:RNA polymerase II general transcription initiation factor activity"/>
    <property type="evidence" value="ECO:0000318"/>
    <property type="project" value="GO_Central"/>
</dbReference>
<dbReference type="GO" id="GO:0006352">
    <property type="term" value="P:DNA-templated transcription initiation"/>
    <property type="evidence" value="ECO:0000318"/>
    <property type="project" value="GO_Central"/>
</dbReference>
<dbReference type="CDD" id="cd04516">
    <property type="entry name" value="TBP_eukaryotes"/>
    <property type="match status" value="1"/>
</dbReference>
<dbReference type="FunFam" id="3.30.310.10:FF:000001">
    <property type="entry name" value="TATA-box-binding protein 2"/>
    <property type="match status" value="1"/>
</dbReference>
<dbReference type="FunFam" id="3.30.310.10:FF:000002">
    <property type="entry name" value="TATA-box-binding protein 2"/>
    <property type="match status" value="1"/>
</dbReference>
<dbReference type="Gene3D" id="3.30.310.10">
    <property type="entry name" value="TATA-Binding Protein"/>
    <property type="match status" value="2"/>
</dbReference>
<dbReference type="HAMAP" id="MF_00408">
    <property type="entry name" value="TATA_bind_prot_arch"/>
    <property type="match status" value="1"/>
</dbReference>
<dbReference type="InterPro" id="IPR000814">
    <property type="entry name" value="TBP"/>
</dbReference>
<dbReference type="InterPro" id="IPR030491">
    <property type="entry name" value="TBP_CS"/>
</dbReference>
<dbReference type="InterPro" id="IPR012295">
    <property type="entry name" value="TBP_dom_sf"/>
</dbReference>
<dbReference type="InterPro" id="IPR033710">
    <property type="entry name" value="TBP_eukaryotic"/>
</dbReference>
<dbReference type="PANTHER" id="PTHR10126">
    <property type="entry name" value="TATA-BOX BINDING PROTEIN"/>
    <property type="match status" value="1"/>
</dbReference>
<dbReference type="Pfam" id="PF00352">
    <property type="entry name" value="TBP"/>
    <property type="match status" value="2"/>
</dbReference>
<dbReference type="PRINTS" id="PR00686">
    <property type="entry name" value="TIFACTORIID"/>
</dbReference>
<dbReference type="SUPFAM" id="SSF55945">
    <property type="entry name" value="TATA-box binding protein-like"/>
    <property type="match status" value="2"/>
</dbReference>
<dbReference type="PROSITE" id="PS00351">
    <property type="entry name" value="TFIID"/>
    <property type="match status" value="2"/>
</dbReference>
<gene>
    <name evidence="1" type="primary">TBPL2</name>
    <name type="synonym">TBP2</name>
    <name evidence="1" type="synonym">TRF3</name>
</gene>
<organism>
    <name type="scientific">Pan troglodytes</name>
    <name type="common">Chimpanzee</name>
    <dbReference type="NCBI Taxonomy" id="9598"/>
    <lineage>
        <taxon>Eukaryota</taxon>
        <taxon>Metazoa</taxon>
        <taxon>Chordata</taxon>
        <taxon>Craniata</taxon>
        <taxon>Vertebrata</taxon>
        <taxon>Euteleostomi</taxon>
        <taxon>Mammalia</taxon>
        <taxon>Eutheria</taxon>
        <taxon>Euarchontoglires</taxon>
        <taxon>Primates</taxon>
        <taxon>Haplorrhini</taxon>
        <taxon>Catarrhini</taxon>
        <taxon>Hominidae</taxon>
        <taxon>Pan</taxon>
    </lineage>
</organism>
<accession>A6H907</accession>
<name>TBPL2_PANTR</name>
<proteinExistence type="evidence at transcript level"/>
<reference evidence="6" key="1">
    <citation type="journal article" date="2005" name="Nature">
        <title>Initial sequence of the chimpanzee genome and comparison with the human genome.</title>
        <authorList>
            <consortium name="Chimpanzee sequencing and analysis consortium"/>
        </authorList>
    </citation>
    <scope>NUCLEOTIDE SEQUENCE [LARGE SCALE GENOMIC DNA]</scope>
</reference>
<reference evidence="6 7" key="2">
    <citation type="journal article" date="2007" name="DNA Cell Biol.">
        <title>Genomics, evolution, and expression of TBPL2, a member of the TBP family.</title>
        <authorList>
            <person name="Di Pietro C."/>
            <person name="Ragusa M."/>
            <person name="Duro L."/>
            <person name="Guglielmino M.R."/>
            <person name="Barbagallo D."/>
            <person name="Carnemolla A."/>
            <person name="Lagana A."/>
            <person name="Buffa P."/>
            <person name="Angelica R."/>
            <person name="Rinaldi A."/>
            <person name="Calafato M.S."/>
            <person name="Milicia I."/>
            <person name="Caserta C."/>
            <person name="Giugno R."/>
            <person name="Pulvirenti A."/>
            <person name="Giunta V."/>
            <person name="Rapisarda A."/>
            <person name="Di Pietro V."/>
            <person name="Grillo A."/>
            <person name="Messina A."/>
            <person name="Ferro A."/>
            <person name="Grzeschik K.H."/>
            <person name="Purrello M."/>
        </authorList>
    </citation>
    <scope>IDENTIFICATION</scope>
</reference>
<feature type="chain" id="PRO_0000318120" description="TATA box-binding protein-like 2">
    <location>
        <begin position="1"/>
        <end position="376"/>
    </location>
</feature>
<feature type="region of interest" description="Disordered" evidence="5">
    <location>
        <begin position="103"/>
        <end position="184"/>
    </location>
</feature>
<feature type="compositionally biased region" description="Basic and acidic residues" evidence="5">
    <location>
        <begin position="108"/>
        <end position="122"/>
    </location>
</feature>
<feature type="compositionally biased region" description="Low complexity" evidence="5">
    <location>
        <begin position="126"/>
        <end position="159"/>
    </location>
</feature>
<feature type="compositionally biased region" description="Polar residues" evidence="5">
    <location>
        <begin position="175"/>
        <end position="184"/>
    </location>
</feature>
<evidence type="ECO:0000250" key="1">
    <source>
        <dbReference type="UniProtKB" id="P62380"/>
    </source>
</evidence>
<evidence type="ECO:0000250" key="2">
    <source>
        <dbReference type="UniProtKB" id="Q6SJ95"/>
    </source>
</evidence>
<evidence type="ECO:0000250" key="3">
    <source>
        <dbReference type="UniProtKB" id="Q6SJ96"/>
    </source>
</evidence>
<evidence type="ECO:0000255" key="4"/>
<evidence type="ECO:0000256" key="5">
    <source>
        <dbReference type="SAM" id="MobiDB-lite"/>
    </source>
</evidence>
<evidence type="ECO:0000305" key="6"/>
<evidence type="ECO:0000312" key="7">
    <source>
        <dbReference type="EMBL" id="DAA06032.1"/>
    </source>
</evidence>
<comment type="function">
    <text evidence="2">Transcription factor required in complex with TAF3 for the differentiation of myoblasts into myocytes. The complex replaces TFIID at specific promoters at an early stage in the differentiation process (By similarity).</text>
</comment>
<comment type="subunit">
    <text evidence="2">Interacts with TAF3.</text>
</comment>
<comment type="subcellular location">
    <subcellularLocation>
        <location evidence="3">Cytoplasm</location>
    </subcellularLocation>
    <subcellularLocation>
        <location evidence="3">Nucleus</location>
    </subcellularLocation>
    <text evidence="3">Present in the cytoplasm during cytokinesis.</text>
</comment>
<comment type="similarity">
    <text evidence="4">Belongs to the TBP family.</text>
</comment>